<sequence>MKLQIYNPNGEEFQYDFKSDIPFSFHIKNLYENLVVHNNGLKKILQSFPYCEANRSYDEIYSHYSLQEATSGNWMSNSTDSTFIKGSPDNTLFFKLKPLTHYLTPIEKLIGTTTSSSSSSSSPSSSSSSSSSSSSSSPSSPSLIGLILSLQTHLALLMYENIYGNKNNSKDTNNSGTINNNNNNNNNSGGSNIKLSSTPSSSFLTFPTSTSNLLLSSDVIKKILNIVFLAPSPQSLQLLVFLVSNSPSNDDLLSQISNTHSNSQLHGFSIGGGGGGSGNNSSITSIGGGDSKKIENKDNSGSAVVGSQSNSPQSSSFVKSQQIQQQQQYQKPNNSSPPPTTTTTTTTTTTTSGSQVKLSVGGNSGSFNNTTESSPSLFTLVDTAIKSVSTEHSSNFYLHILNNPAYNEVIETHFEMVCLILSLINNMYRLSPNPINYFNRLHNDSILKYIMEFAKKNQKIYQNTQYIVLRNYLMKELHMQRLHPINVDKVLSHQILLSDLWGSALSSYPFGGINSEHWLLLGFRSSNPMEDFKNTGVLALRNLSYFSKQHLQPFQSLLLTQTKREKDDNDNNNNKVIDKPIITNKFNIETLDDDNDNNNNQELNNNNNNNNNNNYNIKTKPRSNSRSYPLATVAISLTYTLSNIFRIGRINDSPIDSSIWDIAFSGSNWFDEIFVTTFNLFESLWHSEAHSYSDFPQVISHTREIIEKVCSKSPINLQDFKDKLTTLLEKKDEISSLDVNTVETLARYHQLQPSHINKRHIHKFFGERVNVDKLPNSNNPTDNIITTNTNTTTTTTTSTNNDCESTILQDHIESDKNNDDNNNNNEIIDDCESNSSFLVSSNTKEFSGKNLIKFFGEKTDQKEQYSTQPSNVKSYKLKNFFGDQPVVINKNGGGGGGGGGGGVDNELNQGGETVNKNKNDLIDDSDDENDNDEVNNNNNSNRINQDINHKLYGNSPISERNHRLHVFFGEWFDTEQVEYNEKIRSSSSTPDTSSPPLNSQPESARLHKLNKFFGERVNIPISKPKVIGEGGGGGIFPIDDIDVTDGSTNNHHIGGGGGGGSSDNLLSRSPEETRSDFKAQKVLGERLDIKKEKESINFASQPSNVREYKLHKLFGEMVPAHKQKSPKLQGGSGPWKKGNVSKSDSQAVVAPLNTIKFNNGNTNMNPLLQSCPTPINSPTSLSSDHLLDDVLDLNQTNNNIDNENDDINEAIIPPSLSPTLLGVNNHGEEEEEEEEEEEGYNHTQDNHAQDNHAQDNLLLLDDDDDTKSEPIPSTNTLLDSDIIPNNTTTTTTTTTTTTTTTTNTTGQKRISILSTDTNRPGSSNYGESSLSNGSRFDGIPESTTHNANGDDDHQINLHSSSPQPLPKFVNTDDEDNNNNNNNKKQDDDEDDEDDDDKEEIRKKRENKTNHRLHVFFGERFDVENIHFFTRVSSSPGSYDAHLNNPHLSVSPQPETVRSYKLKKFFGKNPEDNVTLSSSYDSSTSPLLSQLNHHHHHNHHQSASNLINNINNNNNNNNNNNSNNNSNNQNNLNSSNNSNNSSISNNSGKNNTNNNNNNNTNNNNDNSPSTSPSSSFKKHQYQYVSAEDPEGDVSKTNEIRKLRRDFKTQRILGERLNIKKESTVVAFQDQPSTIKVDKLISLFGEKVGFSLKRKESQRDLQHQASSSNLKFSLASSSK</sequence>
<evidence type="ECO:0000255" key="1"/>
<evidence type="ECO:0000255" key="2">
    <source>
        <dbReference type="PROSITE-ProRule" id="PRU00664"/>
    </source>
</evidence>
<evidence type="ECO:0000256" key="3">
    <source>
        <dbReference type="SAM" id="MobiDB-lite"/>
    </source>
</evidence>
<proteinExistence type="predicted"/>
<organism>
    <name type="scientific">Dictyostelium discoideum</name>
    <name type="common">Social amoeba</name>
    <dbReference type="NCBI Taxonomy" id="44689"/>
    <lineage>
        <taxon>Eukaryota</taxon>
        <taxon>Amoebozoa</taxon>
        <taxon>Evosea</taxon>
        <taxon>Eumycetozoa</taxon>
        <taxon>Dictyostelia</taxon>
        <taxon>Dictyosteliales</taxon>
        <taxon>Dictyosteliaceae</taxon>
        <taxon>Dictyostelium</taxon>
    </lineage>
</organism>
<protein>
    <recommendedName>
        <fullName>ELMO domain-containing protein E</fullName>
    </recommendedName>
</protein>
<gene>
    <name type="primary">elmoE</name>
    <name type="ORF">DDB_G0279657</name>
</gene>
<name>ELMOE_DICDI</name>
<reference key="1">
    <citation type="journal article" date="2005" name="Nature">
        <title>The genome of the social amoeba Dictyostelium discoideum.</title>
        <authorList>
            <person name="Eichinger L."/>
            <person name="Pachebat J.A."/>
            <person name="Gloeckner G."/>
            <person name="Rajandream M.A."/>
            <person name="Sucgang R."/>
            <person name="Berriman M."/>
            <person name="Song J."/>
            <person name="Olsen R."/>
            <person name="Szafranski K."/>
            <person name="Xu Q."/>
            <person name="Tunggal B."/>
            <person name="Kummerfeld S."/>
            <person name="Madera M."/>
            <person name="Konfortov B.A."/>
            <person name="Rivero F."/>
            <person name="Bankier A.T."/>
            <person name="Lehmann R."/>
            <person name="Hamlin N."/>
            <person name="Davies R."/>
            <person name="Gaudet P."/>
            <person name="Fey P."/>
            <person name="Pilcher K."/>
            <person name="Chen G."/>
            <person name="Saunders D."/>
            <person name="Sodergren E.J."/>
            <person name="Davis P."/>
            <person name="Kerhornou A."/>
            <person name="Nie X."/>
            <person name="Hall N."/>
            <person name="Anjard C."/>
            <person name="Hemphill L."/>
            <person name="Bason N."/>
            <person name="Farbrother P."/>
            <person name="Desany B."/>
            <person name="Just E."/>
            <person name="Morio T."/>
            <person name="Rost R."/>
            <person name="Churcher C.M."/>
            <person name="Cooper J."/>
            <person name="Haydock S."/>
            <person name="van Driessche N."/>
            <person name="Cronin A."/>
            <person name="Goodhead I."/>
            <person name="Muzny D.M."/>
            <person name="Mourier T."/>
            <person name="Pain A."/>
            <person name="Lu M."/>
            <person name="Harper D."/>
            <person name="Lindsay R."/>
            <person name="Hauser H."/>
            <person name="James K.D."/>
            <person name="Quiles M."/>
            <person name="Madan Babu M."/>
            <person name="Saito T."/>
            <person name="Buchrieser C."/>
            <person name="Wardroper A."/>
            <person name="Felder M."/>
            <person name="Thangavelu M."/>
            <person name="Johnson D."/>
            <person name="Knights A."/>
            <person name="Loulseged H."/>
            <person name="Mungall K.L."/>
            <person name="Oliver K."/>
            <person name="Price C."/>
            <person name="Quail M.A."/>
            <person name="Urushihara H."/>
            <person name="Hernandez J."/>
            <person name="Rabbinowitsch E."/>
            <person name="Steffen D."/>
            <person name="Sanders M."/>
            <person name="Ma J."/>
            <person name="Kohara Y."/>
            <person name="Sharp S."/>
            <person name="Simmonds M.N."/>
            <person name="Spiegler S."/>
            <person name="Tivey A."/>
            <person name="Sugano S."/>
            <person name="White B."/>
            <person name="Walker D."/>
            <person name="Woodward J.R."/>
            <person name="Winckler T."/>
            <person name="Tanaka Y."/>
            <person name="Shaulsky G."/>
            <person name="Schleicher M."/>
            <person name="Weinstock G.M."/>
            <person name="Rosenthal A."/>
            <person name="Cox E.C."/>
            <person name="Chisholm R.L."/>
            <person name="Gibbs R.A."/>
            <person name="Loomis W.F."/>
            <person name="Platzer M."/>
            <person name="Kay R.R."/>
            <person name="Williams J.G."/>
            <person name="Dear P.H."/>
            <person name="Noegel A.A."/>
            <person name="Barrell B.G."/>
            <person name="Kuspa A."/>
        </authorList>
    </citation>
    <scope>NUCLEOTIDE SEQUENCE [LARGE SCALE GENOMIC DNA]</scope>
    <source>
        <strain>AX4</strain>
    </source>
</reference>
<keyword id="KW-0175">Coiled coil</keyword>
<keyword id="KW-1185">Reference proteome</keyword>
<dbReference type="EMBL" id="AAFI02000032">
    <property type="protein sequence ID" value="EAL67603.1"/>
    <property type="molecule type" value="Genomic_DNA"/>
</dbReference>
<dbReference type="RefSeq" id="XP_641578.1">
    <property type="nucleotide sequence ID" value="XM_636486.1"/>
</dbReference>
<dbReference type="SMR" id="Q54WH5"/>
<dbReference type="FunCoup" id="Q54WH5">
    <property type="interactions" value="533"/>
</dbReference>
<dbReference type="STRING" id="44689.Q54WH5"/>
<dbReference type="PaxDb" id="44689-DDB0233920"/>
<dbReference type="EnsemblProtists" id="EAL67603">
    <property type="protein sequence ID" value="EAL67603"/>
    <property type="gene ID" value="DDB_G0279657"/>
</dbReference>
<dbReference type="GeneID" id="8622153"/>
<dbReference type="KEGG" id="ddi:DDB_G0279657"/>
<dbReference type="dictyBase" id="DDB_G0279657">
    <property type="gene designation" value="elmoE"/>
</dbReference>
<dbReference type="VEuPathDB" id="AmoebaDB:DDB_G0279657"/>
<dbReference type="eggNOG" id="ENOG502RE9F">
    <property type="taxonomic scope" value="Eukaryota"/>
</dbReference>
<dbReference type="HOGENOM" id="CLU_241621_0_0_1"/>
<dbReference type="InParanoid" id="Q54WH5"/>
<dbReference type="OMA" id="HVFFGEW"/>
<dbReference type="Reactome" id="R-DDI-8849471">
    <property type="pathway name" value="PTK6 Regulates RHO GTPases, RAS GTPase and MAP kinases"/>
</dbReference>
<dbReference type="PRO" id="PR:Q54WH5"/>
<dbReference type="Proteomes" id="UP000002195">
    <property type="component" value="Chromosome 3"/>
</dbReference>
<dbReference type="GO" id="GO:0031252">
    <property type="term" value="C:cell leading edge"/>
    <property type="evidence" value="ECO:0000314"/>
    <property type="project" value="dictyBase"/>
</dbReference>
<dbReference type="GO" id="GO:0005737">
    <property type="term" value="C:cytoplasm"/>
    <property type="evidence" value="ECO:0000314"/>
    <property type="project" value="dictyBase"/>
</dbReference>
<dbReference type="GO" id="GO:0044354">
    <property type="term" value="C:macropinosome"/>
    <property type="evidence" value="ECO:0000314"/>
    <property type="project" value="dictyBase"/>
</dbReference>
<dbReference type="GO" id="GO:0031681">
    <property type="term" value="F:G-protein beta-subunit binding"/>
    <property type="evidence" value="ECO:0000353"/>
    <property type="project" value="dictyBase"/>
</dbReference>
<dbReference type="GO" id="GO:0031267">
    <property type="term" value="F:small GTPase binding"/>
    <property type="evidence" value="ECO:0000353"/>
    <property type="project" value="dictyBase"/>
</dbReference>
<dbReference type="GO" id="GO:0007015">
    <property type="term" value="P:actin filament organization"/>
    <property type="evidence" value="ECO:0000318"/>
    <property type="project" value="GO_Central"/>
</dbReference>
<dbReference type="GO" id="GO:0030041">
    <property type="term" value="P:actin filament polymerization"/>
    <property type="evidence" value="ECO:0000315"/>
    <property type="project" value="dictyBase"/>
</dbReference>
<dbReference type="GO" id="GO:0048870">
    <property type="term" value="P:cell motility"/>
    <property type="evidence" value="ECO:0000318"/>
    <property type="project" value="GO_Central"/>
</dbReference>
<dbReference type="GO" id="GO:0043327">
    <property type="term" value="P:chemotaxis to cAMP"/>
    <property type="evidence" value="ECO:0000315"/>
    <property type="project" value="dictyBase"/>
</dbReference>
<dbReference type="GO" id="GO:1903013">
    <property type="term" value="P:response to differentiation-inducing factor 1"/>
    <property type="evidence" value="ECO:0007005"/>
    <property type="project" value="dictyBase"/>
</dbReference>
<dbReference type="InterPro" id="IPR006816">
    <property type="entry name" value="ELMO_dom"/>
</dbReference>
<dbReference type="InterPro" id="IPR050868">
    <property type="entry name" value="ELMO_domain-containing"/>
</dbReference>
<dbReference type="PANTHER" id="PTHR12771:SF65">
    <property type="entry name" value="ELMO DOMAIN-CONTAINING PROTEIN E"/>
    <property type="match status" value="1"/>
</dbReference>
<dbReference type="PANTHER" id="PTHR12771">
    <property type="entry name" value="ENGULFMENT AND CELL MOTILITY"/>
    <property type="match status" value="1"/>
</dbReference>
<dbReference type="Pfam" id="PF04727">
    <property type="entry name" value="ELMO_CED12"/>
    <property type="match status" value="1"/>
</dbReference>
<dbReference type="PROSITE" id="PS51335">
    <property type="entry name" value="ELMO"/>
    <property type="match status" value="1"/>
</dbReference>
<feature type="chain" id="PRO_0000333282" description="ELMO domain-containing protein E">
    <location>
        <begin position="1"/>
        <end position="1677"/>
    </location>
</feature>
<feature type="domain" description="ELMO" evidence="2">
    <location>
        <begin position="492"/>
        <end position="710"/>
    </location>
</feature>
<feature type="region of interest" description="Disordered" evidence="3">
    <location>
        <begin position="112"/>
        <end position="139"/>
    </location>
</feature>
<feature type="region of interest" description="Disordered" evidence="3">
    <location>
        <begin position="168"/>
        <end position="194"/>
    </location>
</feature>
<feature type="region of interest" description="Disordered" evidence="3">
    <location>
        <begin position="264"/>
        <end position="372"/>
    </location>
</feature>
<feature type="region of interest" description="Disordered" evidence="3">
    <location>
        <begin position="592"/>
        <end position="625"/>
    </location>
</feature>
<feature type="region of interest" description="Disordered" evidence="3">
    <location>
        <begin position="775"/>
        <end position="801"/>
    </location>
</feature>
<feature type="region of interest" description="Disordered" evidence="3">
    <location>
        <begin position="888"/>
        <end position="947"/>
    </location>
</feature>
<feature type="region of interest" description="Disordered" evidence="3">
    <location>
        <begin position="982"/>
        <end position="1002"/>
    </location>
</feature>
<feature type="region of interest" description="Disordered" evidence="3">
    <location>
        <begin position="1047"/>
        <end position="1075"/>
    </location>
</feature>
<feature type="region of interest" description="Disordered" evidence="3">
    <location>
        <begin position="1122"/>
        <end position="1141"/>
    </location>
</feature>
<feature type="region of interest" description="Disordered" evidence="3">
    <location>
        <begin position="1197"/>
        <end position="1248"/>
    </location>
</feature>
<feature type="region of interest" description="Disordered" evidence="3">
    <location>
        <begin position="1261"/>
        <end position="1404"/>
    </location>
</feature>
<feature type="region of interest" description="Disordered" evidence="3">
    <location>
        <begin position="1434"/>
        <end position="1454"/>
    </location>
</feature>
<feature type="region of interest" description="Disordered" evidence="3">
    <location>
        <begin position="1467"/>
        <end position="1593"/>
    </location>
</feature>
<feature type="region of interest" description="Disordered" evidence="3">
    <location>
        <begin position="1654"/>
        <end position="1677"/>
    </location>
</feature>
<feature type="coiled-coil region" evidence="1">
    <location>
        <begin position="1186"/>
        <end position="1212"/>
    </location>
</feature>
<feature type="compositionally biased region" description="Low complexity" evidence="3">
    <location>
        <begin position="115"/>
        <end position="139"/>
    </location>
</feature>
<feature type="compositionally biased region" description="Low complexity" evidence="3">
    <location>
        <begin position="172"/>
        <end position="194"/>
    </location>
</feature>
<feature type="compositionally biased region" description="Gly residues" evidence="3">
    <location>
        <begin position="269"/>
        <end position="278"/>
    </location>
</feature>
<feature type="compositionally biased region" description="Low complexity" evidence="3">
    <location>
        <begin position="307"/>
        <end position="334"/>
    </location>
</feature>
<feature type="compositionally biased region" description="Low complexity" evidence="3">
    <location>
        <begin position="341"/>
        <end position="352"/>
    </location>
</feature>
<feature type="compositionally biased region" description="Low complexity" evidence="3">
    <location>
        <begin position="597"/>
        <end position="616"/>
    </location>
</feature>
<feature type="compositionally biased region" description="Gly residues" evidence="3">
    <location>
        <begin position="891"/>
        <end position="903"/>
    </location>
</feature>
<feature type="compositionally biased region" description="Acidic residues" evidence="3">
    <location>
        <begin position="922"/>
        <end position="933"/>
    </location>
</feature>
<feature type="compositionally biased region" description="Low complexity" evidence="3">
    <location>
        <begin position="934"/>
        <end position="946"/>
    </location>
</feature>
<feature type="compositionally biased region" description="Low complexity" evidence="3">
    <location>
        <begin position="985"/>
        <end position="996"/>
    </location>
</feature>
<feature type="compositionally biased region" description="Acidic residues" evidence="3">
    <location>
        <begin position="1228"/>
        <end position="1238"/>
    </location>
</feature>
<feature type="compositionally biased region" description="Low complexity" evidence="3">
    <location>
        <begin position="1285"/>
        <end position="1305"/>
    </location>
</feature>
<feature type="compositionally biased region" description="Polar residues" evidence="3">
    <location>
        <begin position="1306"/>
        <end position="1334"/>
    </location>
</feature>
<feature type="compositionally biased region" description="Acidic residues" evidence="3">
    <location>
        <begin position="1387"/>
        <end position="1397"/>
    </location>
</feature>
<feature type="compositionally biased region" description="Polar residues" evidence="3">
    <location>
        <begin position="1445"/>
        <end position="1454"/>
    </location>
</feature>
<feature type="compositionally biased region" description="Low complexity" evidence="3">
    <location>
        <begin position="1475"/>
        <end position="1488"/>
    </location>
</feature>
<feature type="compositionally biased region" description="Low complexity" evidence="3">
    <location>
        <begin position="1503"/>
        <end position="1574"/>
    </location>
</feature>
<feature type="compositionally biased region" description="Low complexity" evidence="3">
    <location>
        <begin position="1663"/>
        <end position="1677"/>
    </location>
</feature>
<accession>Q54WH5</accession>